<name>RL30_BACFR</name>
<feature type="chain" id="PRO_1000056007" description="Large ribosomal subunit protein uL30">
    <location>
        <begin position="1"/>
        <end position="58"/>
    </location>
</feature>
<reference key="1">
    <citation type="journal article" date="2004" name="Proc. Natl. Acad. Sci. U.S.A.">
        <title>Genomic analysis of Bacteroides fragilis reveals extensive DNA inversions regulating cell surface adaptation.</title>
        <authorList>
            <person name="Kuwahara T."/>
            <person name="Yamashita A."/>
            <person name="Hirakawa H."/>
            <person name="Nakayama H."/>
            <person name="Toh H."/>
            <person name="Okada N."/>
            <person name="Kuhara S."/>
            <person name="Hattori M."/>
            <person name="Hayashi T."/>
            <person name="Ohnishi Y."/>
        </authorList>
    </citation>
    <scope>NUCLEOTIDE SEQUENCE [LARGE SCALE GENOMIC DNA]</scope>
    <source>
        <strain>YCH46</strain>
    </source>
</reference>
<dbReference type="EMBL" id="AP006841">
    <property type="protein sequence ID" value="BAD50906.1"/>
    <property type="molecule type" value="Genomic_DNA"/>
</dbReference>
<dbReference type="RefSeq" id="WP_004296332.1">
    <property type="nucleotide sequence ID" value="NZ_UYXF01000007.1"/>
</dbReference>
<dbReference type="RefSeq" id="YP_101440.1">
    <property type="nucleotide sequence ID" value="NC_006347.1"/>
</dbReference>
<dbReference type="SMR" id="Q64NM6"/>
<dbReference type="STRING" id="295405.BF4163"/>
<dbReference type="GeneID" id="93048792"/>
<dbReference type="KEGG" id="bfr:BF4163"/>
<dbReference type="PATRIC" id="fig|295405.11.peg.4017"/>
<dbReference type="HOGENOM" id="CLU_131047_1_1_10"/>
<dbReference type="OrthoDB" id="9812790at2"/>
<dbReference type="Proteomes" id="UP000002197">
    <property type="component" value="Chromosome"/>
</dbReference>
<dbReference type="GO" id="GO:0022625">
    <property type="term" value="C:cytosolic large ribosomal subunit"/>
    <property type="evidence" value="ECO:0007669"/>
    <property type="project" value="TreeGrafter"/>
</dbReference>
<dbReference type="GO" id="GO:0003735">
    <property type="term" value="F:structural constituent of ribosome"/>
    <property type="evidence" value="ECO:0007669"/>
    <property type="project" value="InterPro"/>
</dbReference>
<dbReference type="GO" id="GO:0006412">
    <property type="term" value="P:translation"/>
    <property type="evidence" value="ECO:0007669"/>
    <property type="project" value="UniProtKB-UniRule"/>
</dbReference>
<dbReference type="CDD" id="cd01658">
    <property type="entry name" value="Ribosomal_L30"/>
    <property type="match status" value="1"/>
</dbReference>
<dbReference type="FunFam" id="3.30.1390.20:FF:000001">
    <property type="entry name" value="50S ribosomal protein L30"/>
    <property type="match status" value="1"/>
</dbReference>
<dbReference type="Gene3D" id="3.30.1390.20">
    <property type="entry name" value="Ribosomal protein L30, ferredoxin-like fold domain"/>
    <property type="match status" value="1"/>
</dbReference>
<dbReference type="HAMAP" id="MF_01371_B">
    <property type="entry name" value="Ribosomal_uL30_B"/>
    <property type="match status" value="1"/>
</dbReference>
<dbReference type="InterPro" id="IPR036919">
    <property type="entry name" value="Ribo_uL30_ferredoxin-like_sf"/>
</dbReference>
<dbReference type="InterPro" id="IPR005996">
    <property type="entry name" value="Ribosomal_uL30_bac-type"/>
</dbReference>
<dbReference type="InterPro" id="IPR016082">
    <property type="entry name" value="Ribosomal_uL30_ferredoxin-like"/>
</dbReference>
<dbReference type="NCBIfam" id="TIGR01308">
    <property type="entry name" value="rpmD_bact"/>
    <property type="match status" value="1"/>
</dbReference>
<dbReference type="PANTHER" id="PTHR15892:SF2">
    <property type="entry name" value="LARGE RIBOSOMAL SUBUNIT PROTEIN UL30M"/>
    <property type="match status" value="1"/>
</dbReference>
<dbReference type="PANTHER" id="PTHR15892">
    <property type="entry name" value="MITOCHONDRIAL RIBOSOMAL PROTEIN L30"/>
    <property type="match status" value="1"/>
</dbReference>
<dbReference type="Pfam" id="PF00327">
    <property type="entry name" value="Ribosomal_L30"/>
    <property type="match status" value="1"/>
</dbReference>
<dbReference type="PIRSF" id="PIRSF002211">
    <property type="entry name" value="Ribosomal_L30_bac-type"/>
    <property type="match status" value="1"/>
</dbReference>
<dbReference type="SUPFAM" id="SSF55129">
    <property type="entry name" value="Ribosomal protein L30p/L7e"/>
    <property type="match status" value="1"/>
</dbReference>
<accession>Q64NM6</accession>
<organism>
    <name type="scientific">Bacteroides fragilis (strain YCH46)</name>
    <dbReference type="NCBI Taxonomy" id="295405"/>
    <lineage>
        <taxon>Bacteria</taxon>
        <taxon>Pseudomonadati</taxon>
        <taxon>Bacteroidota</taxon>
        <taxon>Bacteroidia</taxon>
        <taxon>Bacteroidales</taxon>
        <taxon>Bacteroidaceae</taxon>
        <taxon>Bacteroides</taxon>
    </lineage>
</organism>
<keyword id="KW-0687">Ribonucleoprotein</keyword>
<keyword id="KW-0689">Ribosomal protein</keyword>
<gene>
    <name evidence="1" type="primary">rpmD</name>
    <name type="ordered locus">BF4163</name>
</gene>
<evidence type="ECO:0000255" key="1">
    <source>
        <dbReference type="HAMAP-Rule" id="MF_01371"/>
    </source>
</evidence>
<evidence type="ECO:0000305" key="2"/>
<protein>
    <recommendedName>
        <fullName evidence="1">Large ribosomal subunit protein uL30</fullName>
    </recommendedName>
    <alternativeName>
        <fullName evidence="2">50S ribosomal protein L30</fullName>
    </alternativeName>
</protein>
<sequence>MSTIKIKQVKSRIGAPADQKRTLDALGLRKLNRVVEHESTPSILGMVDKVKHLVAIVK</sequence>
<comment type="subunit">
    <text evidence="1">Part of the 50S ribosomal subunit.</text>
</comment>
<comment type="similarity">
    <text evidence="1">Belongs to the universal ribosomal protein uL30 family.</text>
</comment>
<proteinExistence type="inferred from homology"/>